<sequence>MKLLFIAAEGAPFAKTGGLGDVIGALPKSLAKNGNEIAVILPYYDVIDQQFGNQVKDLFYFYTNVGWRHQYVGIKEMIRDNVTFYFIDNRDYFFRGHIYGDWDDGERFAYFQLAALEAMEKINFIPDVLHVHDYHTAMIPFLLKEKYHWIQAYQKIRTVFTIHNIEFQGQFGPGMLGDLFGVGLERYEDGTLRWNNCLNWMKAGVLYADRVTTVSPSYANEIQTVAFGKGLDQVMRMESGKLSGIVNGIDTELYNPENDPHVTFPFSINDLSGKAKNKKELQEQLGLPVNENIPLIGIVSRLTDQKGFDILVSELESILQQDLQMVVLGTGYQQYEEAFRWFANCYPEKLSANITFDIGLAQKIYASSDMFLMPSAFEPCGLSQMMAMRYGTLPIVHEIGGLKDTVEPFNPFDKTGTGFGFNHFSGFWMTNTLLFALDIFHNHKEDWQAIQKNAMSADFSWDTASLAYEKLYMDLKLF</sequence>
<protein>
    <recommendedName>
        <fullName evidence="1">Glycogen synthase</fullName>
        <ecNumber evidence="1">2.4.1.21</ecNumber>
    </recommendedName>
    <alternativeName>
        <fullName evidence="1">Starch [bacterial glycogen] synthase</fullName>
    </alternativeName>
</protein>
<comment type="function">
    <text evidence="1">Synthesizes alpha-1,4-glucan chains using ADP-glucose.</text>
</comment>
<comment type="catalytic activity">
    <reaction evidence="1">
        <text>[(1-&gt;4)-alpha-D-glucosyl](n) + ADP-alpha-D-glucose = [(1-&gt;4)-alpha-D-glucosyl](n+1) + ADP + H(+)</text>
        <dbReference type="Rhea" id="RHEA:18189"/>
        <dbReference type="Rhea" id="RHEA-COMP:9584"/>
        <dbReference type="Rhea" id="RHEA-COMP:9587"/>
        <dbReference type="ChEBI" id="CHEBI:15378"/>
        <dbReference type="ChEBI" id="CHEBI:15444"/>
        <dbReference type="ChEBI" id="CHEBI:57498"/>
        <dbReference type="ChEBI" id="CHEBI:456216"/>
        <dbReference type="EC" id="2.4.1.21"/>
    </reaction>
</comment>
<comment type="pathway">
    <text evidence="1">Glycan biosynthesis; glycogen biosynthesis.</text>
</comment>
<comment type="similarity">
    <text evidence="1">Belongs to the glycosyltransferase 1 family. Bacterial/plant glycogen synthase subfamily.</text>
</comment>
<name>GLGA_STRU0</name>
<accession>B9DRS8</accession>
<reference key="1">
    <citation type="journal article" date="2009" name="BMC Genomics">
        <title>Evidence for niche adaptation in the genome of the bovine pathogen Streptococcus uberis.</title>
        <authorList>
            <person name="Ward P.N."/>
            <person name="Holden M.T.G."/>
            <person name="Leigh J.A."/>
            <person name="Lennard N."/>
            <person name="Bignell A."/>
            <person name="Barron A."/>
            <person name="Clark L."/>
            <person name="Quail M.A."/>
            <person name="Woodward J."/>
            <person name="Barrell B.G."/>
            <person name="Egan S.A."/>
            <person name="Field T.R."/>
            <person name="Maskell D."/>
            <person name="Kehoe M."/>
            <person name="Dowson C.G."/>
            <person name="Chanter N."/>
            <person name="Whatmore A.M."/>
            <person name="Bentley S.D."/>
            <person name="Parkhill J."/>
        </authorList>
    </citation>
    <scope>NUCLEOTIDE SEQUENCE [LARGE SCALE GENOMIC DNA]</scope>
    <source>
        <strain>ATCC BAA-854 / 0140J</strain>
    </source>
</reference>
<organism>
    <name type="scientific">Streptococcus uberis (strain ATCC BAA-854 / 0140J)</name>
    <dbReference type="NCBI Taxonomy" id="218495"/>
    <lineage>
        <taxon>Bacteria</taxon>
        <taxon>Bacillati</taxon>
        <taxon>Bacillota</taxon>
        <taxon>Bacilli</taxon>
        <taxon>Lactobacillales</taxon>
        <taxon>Streptococcaceae</taxon>
        <taxon>Streptococcus</taxon>
    </lineage>
</organism>
<evidence type="ECO:0000255" key="1">
    <source>
        <dbReference type="HAMAP-Rule" id="MF_00484"/>
    </source>
</evidence>
<feature type="chain" id="PRO_1000190089" description="Glycogen synthase">
    <location>
        <begin position="1"/>
        <end position="478"/>
    </location>
</feature>
<feature type="binding site" evidence="1">
    <location>
        <position position="15"/>
    </location>
    <ligand>
        <name>ADP-alpha-D-glucose</name>
        <dbReference type="ChEBI" id="CHEBI:57498"/>
    </ligand>
</feature>
<dbReference type="EC" id="2.4.1.21" evidence="1"/>
<dbReference type="EMBL" id="AM946015">
    <property type="protein sequence ID" value="CAR41536.1"/>
    <property type="molecule type" value="Genomic_DNA"/>
</dbReference>
<dbReference type="RefSeq" id="WP_012658182.1">
    <property type="nucleotide sequence ID" value="NC_012004.1"/>
</dbReference>
<dbReference type="SMR" id="B9DRS8"/>
<dbReference type="STRING" id="218495.SUB0664"/>
<dbReference type="CAZy" id="GT5">
    <property type="family name" value="Glycosyltransferase Family 5"/>
</dbReference>
<dbReference type="KEGG" id="sub:SUB0664"/>
<dbReference type="eggNOG" id="COG0297">
    <property type="taxonomic scope" value="Bacteria"/>
</dbReference>
<dbReference type="HOGENOM" id="CLU_009583_18_2_9"/>
<dbReference type="OrthoDB" id="9808590at2"/>
<dbReference type="UniPathway" id="UPA00164"/>
<dbReference type="Proteomes" id="UP000000449">
    <property type="component" value="Chromosome"/>
</dbReference>
<dbReference type="GO" id="GO:0009011">
    <property type="term" value="F:alpha-1,4-glucan glucosyltransferase (ADP-glucose donor) activity"/>
    <property type="evidence" value="ECO:0007669"/>
    <property type="project" value="UniProtKB-UniRule"/>
</dbReference>
<dbReference type="GO" id="GO:0004373">
    <property type="term" value="F:alpha-1,4-glucan glucosyltransferase (UDP-glucose donor) activity"/>
    <property type="evidence" value="ECO:0007669"/>
    <property type="project" value="InterPro"/>
</dbReference>
<dbReference type="GO" id="GO:0005978">
    <property type="term" value="P:glycogen biosynthetic process"/>
    <property type="evidence" value="ECO:0007669"/>
    <property type="project" value="UniProtKB-UniRule"/>
</dbReference>
<dbReference type="CDD" id="cd03791">
    <property type="entry name" value="GT5_Glycogen_synthase_DULL1-like"/>
    <property type="match status" value="1"/>
</dbReference>
<dbReference type="Gene3D" id="3.40.50.2000">
    <property type="entry name" value="Glycogen Phosphorylase B"/>
    <property type="match status" value="2"/>
</dbReference>
<dbReference type="HAMAP" id="MF_00484">
    <property type="entry name" value="Glycogen_synth"/>
    <property type="match status" value="1"/>
</dbReference>
<dbReference type="InterPro" id="IPR001296">
    <property type="entry name" value="Glyco_trans_1"/>
</dbReference>
<dbReference type="InterPro" id="IPR011835">
    <property type="entry name" value="GS/SS"/>
</dbReference>
<dbReference type="InterPro" id="IPR013534">
    <property type="entry name" value="Starch_synth_cat_dom"/>
</dbReference>
<dbReference type="NCBIfam" id="TIGR02095">
    <property type="entry name" value="glgA"/>
    <property type="match status" value="1"/>
</dbReference>
<dbReference type="NCBIfam" id="NF001898">
    <property type="entry name" value="PRK00654.1-1"/>
    <property type="match status" value="1"/>
</dbReference>
<dbReference type="PANTHER" id="PTHR45825:SF11">
    <property type="entry name" value="ALPHA AMYLASE DOMAIN-CONTAINING PROTEIN"/>
    <property type="match status" value="1"/>
</dbReference>
<dbReference type="PANTHER" id="PTHR45825">
    <property type="entry name" value="GRANULE-BOUND STARCH SYNTHASE 1, CHLOROPLASTIC/AMYLOPLASTIC"/>
    <property type="match status" value="1"/>
</dbReference>
<dbReference type="Pfam" id="PF08323">
    <property type="entry name" value="Glyco_transf_5"/>
    <property type="match status" value="1"/>
</dbReference>
<dbReference type="Pfam" id="PF00534">
    <property type="entry name" value="Glycos_transf_1"/>
    <property type="match status" value="1"/>
</dbReference>
<dbReference type="SUPFAM" id="SSF53756">
    <property type="entry name" value="UDP-Glycosyltransferase/glycogen phosphorylase"/>
    <property type="match status" value="1"/>
</dbReference>
<gene>
    <name evidence="1" type="primary">glgA</name>
    <name type="ordered locus">SUB0664</name>
</gene>
<keyword id="KW-0320">Glycogen biosynthesis</keyword>
<keyword id="KW-0328">Glycosyltransferase</keyword>
<keyword id="KW-1185">Reference proteome</keyword>
<keyword id="KW-0808">Transferase</keyword>
<proteinExistence type="inferred from homology"/>